<protein>
    <recommendedName>
        <fullName evidence="1">RNA-free ribonuclease P</fullName>
        <shortName evidence="1">RNA-free RNase P</shortName>
        <ecNumber evidence="1">3.1.26.5</ecNumber>
    </recommendedName>
    <alternativeName>
        <fullName evidence="1">Protein-only RNase P</fullName>
    </alternativeName>
</protein>
<accession>A8A8M4</accession>
<proteinExistence type="inferred from homology"/>
<sequence>MIKFVIDTSAVTDPRLRQLFGVNELWEVVEKYLELMALAKLKLGFSFYTTPSVMKEIKGFLERSMCPSEIISKLGVWILVKDVSQTEAKIPARVFLEYVAEVKRRLDKGLRVAEESTRRAMEGGEIGEHIRNLREKYREATRKGLLDSVADLEAAILALELGAVLVTNDEGLCKLASKLGVSCIDPLTFVKTIEEYLNLIKRHG</sequence>
<gene>
    <name type="ordered locus">Igni_0092</name>
</gene>
<comment type="function">
    <text evidence="1">RNA-free RNase P that catalyzes the removal of the 5'-leader sequence from pre-tRNA to produce the mature 5'-terminus.</text>
</comment>
<comment type="catalytic activity">
    <reaction evidence="1">
        <text>Endonucleolytic cleavage of RNA, removing 5'-extranucleotides from tRNA precursor.</text>
        <dbReference type="EC" id="3.1.26.5"/>
    </reaction>
</comment>
<comment type="similarity">
    <text evidence="1">Belongs to the HARP family.</text>
</comment>
<organism>
    <name type="scientific">Ignicoccus hospitalis (strain KIN4/I / DSM 18386 / JCM 14125)</name>
    <dbReference type="NCBI Taxonomy" id="453591"/>
    <lineage>
        <taxon>Archaea</taxon>
        <taxon>Thermoproteota</taxon>
        <taxon>Thermoprotei</taxon>
        <taxon>Desulfurococcales</taxon>
        <taxon>Desulfurococcaceae</taxon>
        <taxon>Ignicoccus</taxon>
    </lineage>
</organism>
<evidence type="ECO:0000255" key="1">
    <source>
        <dbReference type="HAMAP-Rule" id="MF_01078"/>
    </source>
</evidence>
<keyword id="KW-0255">Endonuclease</keyword>
<keyword id="KW-0378">Hydrolase</keyword>
<keyword id="KW-0540">Nuclease</keyword>
<keyword id="KW-1185">Reference proteome</keyword>
<keyword id="KW-0819">tRNA processing</keyword>
<name>RFRNP_IGNH4</name>
<reference key="1">
    <citation type="journal article" date="2008" name="Genome Biol.">
        <title>A genomic analysis of the archaeal system Ignicoccus hospitalis-Nanoarchaeum equitans.</title>
        <authorList>
            <person name="Podar M."/>
            <person name="Anderson I."/>
            <person name="Makarova K.S."/>
            <person name="Elkins J.G."/>
            <person name="Ivanova N."/>
            <person name="Wall M.A."/>
            <person name="Lykidis A."/>
            <person name="Mavromatis K."/>
            <person name="Sun H."/>
            <person name="Hudson M.E."/>
            <person name="Chen W."/>
            <person name="Deciu C."/>
            <person name="Hutchison D."/>
            <person name="Eads J.R."/>
            <person name="Anderson A."/>
            <person name="Fernandes F."/>
            <person name="Szeto E."/>
            <person name="Lapidus A."/>
            <person name="Kyrpides N.C."/>
            <person name="Saier M.H. Jr."/>
            <person name="Richardson P.M."/>
            <person name="Rachel R."/>
            <person name="Huber H."/>
            <person name="Eisen J.A."/>
            <person name="Koonin E.V."/>
            <person name="Keller M."/>
            <person name="Stetter K.O."/>
        </authorList>
    </citation>
    <scope>NUCLEOTIDE SEQUENCE [LARGE SCALE GENOMIC DNA]</scope>
    <source>
        <strain>KIN4/I / DSM 18386 / JCM 14125</strain>
    </source>
</reference>
<feature type="chain" id="PRO_0000366693" description="RNA-free ribonuclease P">
    <location>
        <begin position="1"/>
        <end position="204"/>
    </location>
</feature>
<dbReference type="EC" id="3.1.26.5" evidence="1"/>
<dbReference type="EMBL" id="CP000816">
    <property type="protein sequence ID" value="ABU81276.1"/>
    <property type="molecule type" value="Genomic_DNA"/>
</dbReference>
<dbReference type="RefSeq" id="WP_011998128.1">
    <property type="nucleotide sequence ID" value="NC_009776.1"/>
</dbReference>
<dbReference type="SMR" id="A8A8M4"/>
<dbReference type="STRING" id="453591.Igni_0092"/>
<dbReference type="GeneID" id="5562151"/>
<dbReference type="KEGG" id="iho:Igni_0092"/>
<dbReference type="eggNOG" id="arCOG00720">
    <property type="taxonomic scope" value="Archaea"/>
</dbReference>
<dbReference type="HOGENOM" id="CLU_109672_0_0_2"/>
<dbReference type="OrthoDB" id="95197at2157"/>
<dbReference type="PhylomeDB" id="A8A8M4"/>
<dbReference type="Proteomes" id="UP000000262">
    <property type="component" value="Chromosome"/>
</dbReference>
<dbReference type="GO" id="GO:0004526">
    <property type="term" value="F:ribonuclease P activity"/>
    <property type="evidence" value="ECO:0007669"/>
    <property type="project" value="UniProtKB-UniRule"/>
</dbReference>
<dbReference type="GO" id="GO:0001682">
    <property type="term" value="P:tRNA 5'-leader removal"/>
    <property type="evidence" value="ECO:0007669"/>
    <property type="project" value="UniProtKB-UniRule"/>
</dbReference>
<dbReference type="CDD" id="cd18691">
    <property type="entry name" value="PIN_VapC-like"/>
    <property type="match status" value="1"/>
</dbReference>
<dbReference type="HAMAP" id="MF_01078">
    <property type="entry name" value="RNA_free_RNase_P"/>
    <property type="match status" value="1"/>
</dbReference>
<dbReference type="InterPro" id="IPR029060">
    <property type="entry name" value="PIN-like_dom_sf"/>
</dbReference>
<dbReference type="InterPro" id="IPR014856">
    <property type="entry name" value="RNA_free_RNase_P"/>
</dbReference>
<dbReference type="NCBIfam" id="NF003345">
    <property type="entry name" value="PRK04358.1-6"/>
    <property type="match status" value="1"/>
</dbReference>
<dbReference type="NCBIfam" id="TIGR03875">
    <property type="entry name" value="RNA_lig_partner"/>
    <property type="match status" value="1"/>
</dbReference>
<dbReference type="PANTHER" id="PTHR41173:SF1">
    <property type="entry name" value="RNA-FREE RIBONUCLEASE P"/>
    <property type="match status" value="1"/>
</dbReference>
<dbReference type="PANTHER" id="PTHR41173">
    <property type="entry name" value="UPF0278 PROTEIN TK1425"/>
    <property type="match status" value="1"/>
</dbReference>
<dbReference type="Pfam" id="PF08745">
    <property type="entry name" value="PIN_5"/>
    <property type="match status" value="1"/>
</dbReference>
<dbReference type="SUPFAM" id="SSF88723">
    <property type="entry name" value="PIN domain-like"/>
    <property type="match status" value="1"/>
</dbReference>